<organism>
    <name type="scientific">Neisseria meningitidis serogroup C (strain 053442)</name>
    <dbReference type="NCBI Taxonomy" id="374833"/>
    <lineage>
        <taxon>Bacteria</taxon>
        <taxon>Pseudomonadati</taxon>
        <taxon>Pseudomonadota</taxon>
        <taxon>Betaproteobacteria</taxon>
        <taxon>Neisseriales</taxon>
        <taxon>Neisseriaceae</taxon>
        <taxon>Neisseria</taxon>
    </lineage>
</organism>
<reference key="1">
    <citation type="journal article" date="2008" name="Genomics">
        <title>Characterization of ST-4821 complex, a unique Neisseria meningitidis clone.</title>
        <authorList>
            <person name="Peng J."/>
            <person name="Yang L."/>
            <person name="Yang F."/>
            <person name="Yang J."/>
            <person name="Yan Y."/>
            <person name="Nie H."/>
            <person name="Zhang X."/>
            <person name="Xiong Z."/>
            <person name="Jiang Y."/>
            <person name="Cheng F."/>
            <person name="Xu X."/>
            <person name="Chen S."/>
            <person name="Sun L."/>
            <person name="Li W."/>
            <person name="Shen Y."/>
            <person name="Shao Z."/>
            <person name="Liang X."/>
            <person name="Xu J."/>
            <person name="Jin Q."/>
        </authorList>
    </citation>
    <scope>NUCLEOTIDE SEQUENCE [LARGE SCALE GENOMIC DNA]</scope>
    <source>
        <strain>053442</strain>
    </source>
</reference>
<sequence>MNLLNLFNPLQTAGMEEEFDAIKIGIASPETIRSWSYGEVKKPETINYRTFKPERDGLFCAKIFGPVKDYECLCGKYKRLKFKGVTCEKCGVEVTLSKVRRERMGHIELAAPVAHIWFLKSLPSRLGMVLDMTLRDIERVLYFEAFVVTDPGMTPLQRRQLLTEDDYYNKLDEYGDDFDAKMGAEGIRELLRTLNVAGEIEILRQELESTGSDTKIKKIAKRLKVLEAFHRSGMKLEWMIMDVLPVLPPDLRPLVPLDGGRFATSDLNDLYRRVINRNNRLKRLLELHAPDIIVRNEKRMLQEAVDSLLDNGRRGKAMTGANKRPLKSLADMIKGKGGRFRQNLLGKRVDYSGRSVITVGPYLRLHQCGLPKKMALELFKPFIFHKLEKQGLASTVKAAKKLVEQEVPEVWDILEEVIREHPIMLNRAPTLHRLGIQAFEPILIEGKAIQLHPLVCAAFNADFDGDQMAVHVPLSLEAQMEARTLMLASNNVLSPANGEPIIVPSQDIVLGLYYMTRDRINAKGEGSLFADVKEVHRAYHTKQVELGTKITVRLREWVKNEAGEFEPVVNRYETTVGRALLSEILPKGLPFEYVNKALKKKEISKLINASFRLCGLRDTVIFADHLMYTGFGFAAKGGISIAVDDMEIPKEKAALLAEANAEVKEIEDQYRQGLVTNGERYNKVVDIWGRAGDKIAKAMMDNLSKQKVIDRAGNEVDQESFNSIYMMADSGARGSAAQIKQLSGMRGLMAKPDGSIIETPITSNFREGLTVLQYFIATHGARKGLADTALKTANSGYLTRRLVDVTQDLVVVEDDCGTSDGFVMKAVVQGGDVIEALRDRILGRVTASDVVDPSSGETLVEAGTLLTEKLVDMIDQSGVDEVKVRTPITCKTRHGLCAHCYGRDLARGKLVNAGEAVGVIAAQSIGEPGTQLTMRTFHIGGAASRAAAASQVEAKSNGTARFSSQMRYVANNKGELVVIGRSCEVVIHDDIGRERERHKVPYGAILLVQDGMAIKAGQTLATWDPHTRPMITEHAGMVKFENVEEGVTVAKQTDDVTGLSTLVVIDGKRRSSSASKLLRPTVKLLDENGVEICIPGTSTPVSMAFPVGAVITVREGQEIGKGDVLARIPQASSKTRDITGGLPRVAELFEARVPKDAGMLAEITGTVSFGKETKGKQRLIVTDVDGVAYETLISKEKQILVHDGQVVNRGETIVDGAVDPHDILRLQGIEALARYIVQEVQEVYRLQGVKISDKHIEVIIRQMLRRVNIADAGETGFITGEQVERGDVMLANEKALEEGKEPARYENVLLGITKASLSTDSFISAASFQETTRVLTEAAIMGKQDELRGLKENVIVGRLIPAGTGLTYHRSRHQQWQEVEQETAETQVTDE</sequence>
<evidence type="ECO:0000255" key="1">
    <source>
        <dbReference type="HAMAP-Rule" id="MF_01322"/>
    </source>
</evidence>
<protein>
    <recommendedName>
        <fullName evidence="1">DNA-directed RNA polymerase subunit beta'</fullName>
        <shortName evidence="1">RNAP subunit beta'</shortName>
        <ecNumber evidence="1">2.7.7.6</ecNumber>
    </recommendedName>
    <alternativeName>
        <fullName evidence="1">RNA polymerase subunit beta'</fullName>
    </alternativeName>
    <alternativeName>
        <fullName evidence="1">Transcriptase subunit beta'</fullName>
    </alternativeName>
</protein>
<keyword id="KW-0240">DNA-directed RNA polymerase</keyword>
<keyword id="KW-0460">Magnesium</keyword>
<keyword id="KW-0479">Metal-binding</keyword>
<keyword id="KW-0548">Nucleotidyltransferase</keyword>
<keyword id="KW-0804">Transcription</keyword>
<keyword id="KW-0808">Transferase</keyword>
<keyword id="KW-0862">Zinc</keyword>
<comment type="function">
    <text evidence="1">DNA-dependent RNA polymerase catalyzes the transcription of DNA into RNA using the four ribonucleoside triphosphates as substrates.</text>
</comment>
<comment type="catalytic activity">
    <reaction evidence="1">
        <text>RNA(n) + a ribonucleoside 5'-triphosphate = RNA(n+1) + diphosphate</text>
        <dbReference type="Rhea" id="RHEA:21248"/>
        <dbReference type="Rhea" id="RHEA-COMP:14527"/>
        <dbReference type="Rhea" id="RHEA-COMP:17342"/>
        <dbReference type="ChEBI" id="CHEBI:33019"/>
        <dbReference type="ChEBI" id="CHEBI:61557"/>
        <dbReference type="ChEBI" id="CHEBI:140395"/>
        <dbReference type="EC" id="2.7.7.6"/>
    </reaction>
</comment>
<comment type="cofactor">
    <cofactor evidence="1">
        <name>Mg(2+)</name>
        <dbReference type="ChEBI" id="CHEBI:18420"/>
    </cofactor>
    <text evidence="1">Binds 1 Mg(2+) ion per subunit.</text>
</comment>
<comment type="cofactor">
    <cofactor evidence="1">
        <name>Zn(2+)</name>
        <dbReference type="ChEBI" id="CHEBI:29105"/>
    </cofactor>
    <text evidence="1">Binds 2 Zn(2+) ions per subunit.</text>
</comment>
<comment type="subunit">
    <text evidence="1">The RNAP catalytic core consists of 2 alpha, 1 beta, 1 beta' and 1 omega subunit. When a sigma factor is associated with the core the holoenzyme is formed, which can initiate transcription.</text>
</comment>
<comment type="similarity">
    <text evidence="1">Belongs to the RNA polymerase beta' chain family.</text>
</comment>
<dbReference type="EC" id="2.7.7.6" evidence="1"/>
<dbReference type="EMBL" id="CP000381">
    <property type="protein sequence ID" value="ABX74135.1"/>
    <property type="molecule type" value="Genomic_DNA"/>
</dbReference>
<dbReference type="RefSeq" id="WP_012222134.1">
    <property type="nucleotide sequence ID" value="NC_010120.1"/>
</dbReference>
<dbReference type="SMR" id="A9M3X3"/>
<dbReference type="KEGG" id="nmn:NMCC_2012"/>
<dbReference type="HOGENOM" id="CLU_000524_3_1_4"/>
<dbReference type="Proteomes" id="UP000001177">
    <property type="component" value="Chromosome"/>
</dbReference>
<dbReference type="GO" id="GO:0000428">
    <property type="term" value="C:DNA-directed RNA polymerase complex"/>
    <property type="evidence" value="ECO:0007669"/>
    <property type="project" value="UniProtKB-KW"/>
</dbReference>
<dbReference type="GO" id="GO:0003677">
    <property type="term" value="F:DNA binding"/>
    <property type="evidence" value="ECO:0007669"/>
    <property type="project" value="UniProtKB-UniRule"/>
</dbReference>
<dbReference type="GO" id="GO:0003899">
    <property type="term" value="F:DNA-directed RNA polymerase activity"/>
    <property type="evidence" value="ECO:0007669"/>
    <property type="project" value="UniProtKB-UniRule"/>
</dbReference>
<dbReference type="GO" id="GO:0000287">
    <property type="term" value="F:magnesium ion binding"/>
    <property type="evidence" value="ECO:0007669"/>
    <property type="project" value="UniProtKB-UniRule"/>
</dbReference>
<dbReference type="GO" id="GO:0008270">
    <property type="term" value="F:zinc ion binding"/>
    <property type="evidence" value="ECO:0007669"/>
    <property type="project" value="UniProtKB-UniRule"/>
</dbReference>
<dbReference type="GO" id="GO:0006351">
    <property type="term" value="P:DNA-templated transcription"/>
    <property type="evidence" value="ECO:0007669"/>
    <property type="project" value="UniProtKB-UniRule"/>
</dbReference>
<dbReference type="CDD" id="cd02655">
    <property type="entry name" value="RNAP_beta'_C"/>
    <property type="match status" value="1"/>
</dbReference>
<dbReference type="CDD" id="cd01609">
    <property type="entry name" value="RNAP_beta'_N"/>
    <property type="match status" value="1"/>
</dbReference>
<dbReference type="FunFam" id="1.10.132.30:FF:000003">
    <property type="entry name" value="DNA-directed RNA polymerase subunit beta"/>
    <property type="match status" value="1"/>
</dbReference>
<dbReference type="FunFam" id="1.10.150.390:FF:000002">
    <property type="entry name" value="DNA-directed RNA polymerase subunit beta"/>
    <property type="match status" value="1"/>
</dbReference>
<dbReference type="FunFam" id="4.10.860.120:FF:000001">
    <property type="entry name" value="DNA-directed RNA polymerase subunit beta"/>
    <property type="match status" value="1"/>
</dbReference>
<dbReference type="Gene3D" id="1.10.132.30">
    <property type="match status" value="1"/>
</dbReference>
<dbReference type="Gene3D" id="1.10.150.390">
    <property type="match status" value="1"/>
</dbReference>
<dbReference type="Gene3D" id="1.10.1790.20">
    <property type="match status" value="1"/>
</dbReference>
<dbReference type="Gene3D" id="1.10.40.90">
    <property type="match status" value="1"/>
</dbReference>
<dbReference type="Gene3D" id="2.40.40.20">
    <property type="match status" value="1"/>
</dbReference>
<dbReference type="Gene3D" id="2.40.50.100">
    <property type="match status" value="3"/>
</dbReference>
<dbReference type="Gene3D" id="4.10.860.120">
    <property type="entry name" value="RNA polymerase II, clamp domain"/>
    <property type="match status" value="1"/>
</dbReference>
<dbReference type="Gene3D" id="1.10.274.100">
    <property type="entry name" value="RNA polymerase Rpb1, domain 3"/>
    <property type="match status" value="1"/>
</dbReference>
<dbReference type="HAMAP" id="MF_01322">
    <property type="entry name" value="RNApol_bact_RpoC"/>
    <property type="match status" value="1"/>
</dbReference>
<dbReference type="InterPro" id="IPR045867">
    <property type="entry name" value="DNA-dir_RpoC_beta_prime"/>
</dbReference>
<dbReference type="InterPro" id="IPR012754">
    <property type="entry name" value="DNA-dir_RpoC_beta_prime_bact"/>
</dbReference>
<dbReference type="InterPro" id="IPR000722">
    <property type="entry name" value="RNA_pol_asu"/>
</dbReference>
<dbReference type="InterPro" id="IPR006592">
    <property type="entry name" value="RNA_pol_N"/>
</dbReference>
<dbReference type="InterPro" id="IPR007080">
    <property type="entry name" value="RNA_pol_Rpb1_1"/>
</dbReference>
<dbReference type="InterPro" id="IPR007066">
    <property type="entry name" value="RNA_pol_Rpb1_3"/>
</dbReference>
<dbReference type="InterPro" id="IPR042102">
    <property type="entry name" value="RNA_pol_Rpb1_3_sf"/>
</dbReference>
<dbReference type="InterPro" id="IPR007083">
    <property type="entry name" value="RNA_pol_Rpb1_4"/>
</dbReference>
<dbReference type="InterPro" id="IPR007081">
    <property type="entry name" value="RNA_pol_Rpb1_5"/>
</dbReference>
<dbReference type="InterPro" id="IPR044893">
    <property type="entry name" value="RNA_pol_Rpb1_clamp_domain"/>
</dbReference>
<dbReference type="InterPro" id="IPR038120">
    <property type="entry name" value="Rpb1_funnel_sf"/>
</dbReference>
<dbReference type="NCBIfam" id="TIGR02386">
    <property type="entry name" value="rpoC_TIGR"/>
    <property type="match status" value="1"/>
</dbReference>
<dbReference type="PANTHER" id="PTHR19376">
    <property type="entry name" value="DNA-DIRECTED RNA POLYMERASE"/>
    <property type="match status" value="1"/>
</dbReference>
<dbReference type="PANTHER" id="PTHR19376:SF54">
    <property type="entry name" value="DNA-DIRECTED RNA POLYMERASE SUBUNIT BETA"/>
    <property type="match status" value="1"/>
</dbReference>
<dbReference type="Pfam" id="PF04997">
    <property type="entry name" value="RNA_pol_Rpb1_1"/>
    <property type="match status" value="1"/>
</dbReference>
<dbReference type="Pfam" id="PF00623">
    <property type="entry name" value="RNA_pol_Rpb1_2"/>
    <property type="match status" value="2"/>
</dbReference>
<dbReference type="Pfam" id="PF04983">
    <property type="entry name" value="RNA_pol_Rpb1_3"/>
    <property type="match status" value="1"/>
</dbReference>
<dbReference type="Pfam" id="PF05000">
    <property type="entry name" value="RNA_pol_Rpb1_4"/>
    <property type="match status" value="1"/>
</dbReference>
<dbReference type="Pfam" id="PF04998">
    <property type="entry name" value="RNA_pol_Rpb1_5"/>
    <property type="match status" value="1"/>
</dbReference>
<dbReference type="SMART" id="SM00663">
    <property type="entry name" value="RPOLA_N"/>
    <property type="match status" value="1"/>
</dbReference>
<dbReference type="SUPFAM" id="SSF64484">
    <property type="entry name" value="beta and beta-prime subunits of DNA dependent RNA-polymerase"/>
    <property type="match status" value="1"/>
</dbReference>
<name>RPOC_NEIM0</name>
<gene>
    <name evidence="1" type="primary">rpoC</name>
    <name type="ordered locus">NMCC_2012</name>
</gene>
<proteinExistence type="inferred from homology"/>
<accession>A9M3X3</accession>
<feature type="chain" id="PRO_1000086399" description="DNA-directed RNA polymerase subunit beta'">
    <location>
        <begin position="1"/>
        <end position="1391"/>
    </location>
</feature>
<feature type="binding site" evidence="1">
    <location>
        <position position="72"/>
    </location>
    <ligand>
        <name>Zn(2+)</name>
        <dbReference type="ChEBI" id="CHEBI:29105"/>
        <label>1</label>
    </ligand>
</feature>
<feature type="binding site" evidence="1">
    <location>
        <position position="74"/>
    </location>
    <ligand>
        <name>Zn(2+)</name>
        <dbReference type="ChEBI" id="CHEBI:29105"/>
        <label>1</label>
    </ligand>
</feature>
<feature type="binding site" evidence="1">
    <location>
        <position position="87"/>
    </location>
    <ligand>
        <name>Zn(2+)</name>
        <dbReference type="ChEBI" id="CHEBI:29105"/>
        <label>1</label>
    </ligand>
</feature>
<feature type="binding site" evidence="1">
    <location>
        <position position="90"/>
    </location>
    <ligand>
        <name>Zn(2+)</name>
        <dbReference type="ChEBI" id="CHEBI:29105"/>
        <label>1</label>
    </ligand>
</feature>
<feature type="binding site" evidence="1">
    <location>
        <position position="462"/>
    </location>
    <ligand>
        <name>Mg(2+)</name>
        <dbReference type="ChEBI" id="CHEBI:18420"/>
    </ligand>
</feature>
<feature type="binding site" evidence="1">
    <location>
        <position position="464"/>
    </location>
    <ligand>
        <name>Mg(2+)</name>
        <dbReference type="ChEBI" id="CHEBI:18420"/>
    </ligand>
</feature>
<feature type="binding site" evidence="1">
    <location>
        <position position="466"/>
    </location>
    <ligand>
        <name>Mg(2+)</name>
        <dbReference type="ChEBI" id="CHEBI:18420"/>
    </ligand>
</feature>
<feature type="binding site" evidence="1">
    <location>
        <position position="816"/>
    </location>
    <ligand>
        <name>Zn(2+)</name>
        <dbReference type="ChEBI" id="CHEBI:29105"/>
        <label>2</label>
    </ligand>
</feature>
<feature type="binding site" evidence="1">
    <location>
        <position position="890"/>
    </location>
    <ligand>
        <name>Zn(2+)</name>
        <dbReference type="ChEBI" id="CHEBI:29105"/>
        <label>2</label>
    </ligand>
</feature>
<feature type="binding site" evidence="1">
    <location>
        <position position="897"/>
    </location>
    <ligand>
        <name>Zn(2+)</name>
        <dbReference type="ChEBI" id="CHEBI:29105"/>
        <label>2</label>
    </ligand>
</feature>
<feature type="binding site" evidence="1">
    <location>
        <position position="900"/>
    </location>
    <ligand>
        <name>Zn(2+)</name>
        <dbReference type="ChEBI" id="CHEBI:29105"/>
        <label>2</label>
    </ligand>
</feature>